<evidence type="ECO:0000250" key="1">
    <source>
        <dbReference type="UniProtKB" id="Q7A4T2"/>
    </source>
</evidence>
<evidence type="ECO:0000255" key="2">
    <source>
        <dbReference type="HAMAP-Rule" id="MF_01568"/>
    </source>
</evidence>
<evidence type="ECO:0000269" key="3">
    <source>
    </source>
</evidence>
<evidence type="ECO:0000303" key="4">
    <source>
    </source>
</evidence>
<evidence type="ECO:0000305" key="5"/>
<gene>
    <name type="ordered locus">SAOUHSC_02004</name>
</gene>
<comment type="function">
    <text evidence="1 3">Has nucleoside phosphatase activity towards nucleoside triphosphates and nucleoside diphosphates (By similarity). Can hydrolyze nucleoside diphosphates (NDPs) and deoxynucleoside diphosphates (dNDPs), including ADP, GDP, UDP, CDP, IDP, TDP, dADP, dGDP and dCDP (PubMed:27422825).</text>
</comment>
<comment type="function">
    <text evidence="3">Plays an important role in S.aureus virulence (PubMed:27422825). Required for hemolysin production, nuclease production and colony spreading, and contributes to the expression of extracellular proteins and cell wall proteins (PubMed:27422825).</text>
</comment>
<comment type="catalytic activity">
    <reaction evidence="1 2">
        <text>a ribonucleoside 5'-triphosphate + H2O = a ribonucleoside 5'-diphosphate + phosphate + H(+)</text>
        <dbReference type="Rhea" id="RHEA:23680"/>
        <dbReference type="ChEBI" id="CHEBI:15377"/>
        <dbReference type="ChEBI" id="CHEBI:15378"/>
        <dbReference type="ChEBI" id="CHEBI:43474"/>
        <dbReference type="ChEBI" id="CHEBI:57930"/>
        <dbReference type="ChEBI" id="CHEBI:61557"/>
        <dbReference type="EC" id="3.6.1.15"/>
    </reaction>
</comment>
<comment type="catalytic activity">
    <reaction evidence="2 3">
        <text>a ribonucleoside 5'-diphosphate + H2O = a ribonucleoside 5'-phosphate + phosphate + H(+)</text>
        <dbReference type="Rhea" id="RHEA:36799"/>
        <dbReference type="ChEBI" id="CHEBI:15377"/>
        <dbReference type="ChEBI" id="CHEBI:15378"/>
        <dbReference type="ChEBI" id="CHEBI:43474"/>
        <dbReference type="ChEBI" id="CHEBI:57930"/>
        <dbReference type="ChEBI" id="CHEBI:58043"/>
        <dbReference type="EC" id="3.6.1.6"/>
    </reaction>
</comment>
<comment type="catalytic activity">
    <reaction evidence="3">
        <text>a 2'-deoxyribonucleoside 5'-diphosphate + H2O = a 2'-deoxyribonucleoside 5'-phosphate + phosphate + H(+)</text>
        <dbReference type="Rhea" id="RHEA:64920"/>
        <dbReference type="ChEBI" id="CHEBI:15377"/>
        <dbReference type="ChEBI" id="CHEBI:15378"/>
        <dbReference type="ChEBI" id="CHEBI:43474"/>
        <dbReference type="ChEBI" id="CHEBI:65317"/>
        <dbReference type="ChEBI" id="CHEBI:73316"/>
    </reaction>
</comment>
<comment type="catalytic activity">
    <reaction evidence="3">
        <text>ADP + H2O = AMP + phosphate + H(+)</text>
        <dbReference type="Rhea" id="RHEA:61436"/>
        <dbReference type="ChEBI" id="CHEBI:15377"/>
        <dbReference type="ChEBI" id="CHEBI:15378"/>
        <dbReference type="ChEBI" id="CHEBI:43474"/>
        <dbReference type="ChEBI" id="CHEBI:456215"/>
        <dbReference type="ChEBI" id="CHEBI:456216"/>
        <dbReference type="EC" id="3.6.1.6"/>
    </reaction>
</comment>
<comment type="catalytic activity">
    <reaction evidence="3">
        <text>GDP + H2O = GMP + phosphate + H(+)</text>
        <dbReference type="Rhea" id="RHEA:22156"/>
        <dbReference type="ChEBI" id="CHEBI:15377"/>
        <dbReference type="ChEBI" id="CHEBI:15378"/>
        <dbReference type="ChEBI" id="CHEBI:43474"/>
        <dbReference type="ChEBI" id="CHEBI:58115"/>
        <dbReference type="ChEBI" id="CHEBI:58189"/>
        <dbReference type="EC" id="3.6.1.6"/>
    </reaction>
</comment>
<comment type="catalytic activity">
    <reaction evidence="3">
        <text>UDP + H2O = UMP + phosphate + H(+)</text>
        <dbReference type="Rhea" id="RHEA:64876"/>
        <dbReference type="ChEBI" id="CHEBI:15377"/>
        <dbReference type="ChEBI" id="CHEBI:15378"/>
        <dbReference type="ChEBI" id="CHEBI:43474"/>
        <dbReference type="ChEBI" id="CHEBI:57865"/>
        <dbReference type="ChEBI" id="CHEBI:58223"/>
        <dbReference type="EC" id="3.6.1.6"/>
    </reaction>
</comment>
<comment type="catalytic activity">
    <reaction evidence="3">
        <text>CDP + H2O = CMP + phosphate + H(+)</text>
        <dbReference type="Rhea" id="RHEA:64880"/>
        <dbReference type="ChEBI" id="CHEBI:15377"/>
        <dbReference type="ChEBI" id="CHEBI:15378"/>
        <dbReference type="ChEBI" id="CHEBI:43474"/>
        <dbReference type="ChEBI" id="CHEBI:58069"/>
        <dbReference type="ChEBI" id="CHEBI:60377"/>
        <dbReference type="EC" id="3.6.1.6"/>
    </reaction>
</comment>
<comment type="catalytic activity">
    <reaction evidence="3">
        <text>IDP + H2O = IMP + phosphate + H(+)</text>
        <dbReference type="Rhea" id="RHEA:35207"/>
        <dbReference type="ChEBI" id="CHEBI:15377"/>
        <dbReference type="ChEBI" id="CHEBI:15378"/>
        <dbReference type="ChEBI" id="CHEBI:43474"/>
        <dbReference type="ChEBI" id="CHEBI:58053"/>
        <dbReference type="ChEBI" id="CHEBI:58280"/>
        <dbReference type="EC" id="3.6.1.6"/>
    </reaction>
</comment>
<comment type="catalytic activity">
    <reaction evidence="3">
        <text>dADP + H2O = dAMP + phosphate + H(+)</text>
        <dbReference type="Rhea" id="RHEA:64928"/>
        <dbReference type="ChEBI" id="CHEBI:15377"/>
        <dbReference type="ChEBI" id="CHEBI:15378"/>
        <dbReference type="ChEBI" id="CHEBI:43474"/>
        <dbReference type="ChEBI" id="CHEBI:57667"/>
        <dbReference type="ChEBI" id="CHEBI:58245"/>
    </reaction>
</comment>
<comment type="catalytic activity">
    <reaction evidence="3">
        <text>dGDP + H2O = dGMP + phosphate + H(+)</text>
        <dbReference type="Rhea" id="RHEA:64940"/>
        <dbReference type="ChEBI" id="CHEBI:15377"/>
        <dbReference type="ChEBI" id="CHEBI:15378"/>
        <dbReference type="ChEBI" id="CHEBI:43474"/>
        <dbReference type="ChEBI" id="CHEBI:57673"/>
        <dbReference type="ChEBI" id="CHEBI:58595"/>
    </reaction>
</comment>
<comment type="catalytic activity">
    <reaction evidence="3">
        <text>dCDP + H2O = dCMP + phosphate + H(+)</text>
        <dbReference type="Rhea" id="RHEA:64952"/>
        <dbReference type="ChEBI" id="CHEBI:15377"/>
        <dbReference type="ChEBI" id="CHEBI:15378"/>
        <dbReference type="ChEBI" id="CHEBI:43474"/>
        <dbReference type="ChEBI" id="CHEBI:57566"/>
        <dbReference type="ChEBI" id="CHEBI:58593"/>
    </reaction>
</comment>
<comment type="cofactor">
    <cofactor evidence="2 3">
        <name>Mg(2+)</name>
        <dbReference type="ChEBI" id="CHEBI:18420"/>
    </cofactor>
    <cofactor evidence="3">
        <name>Mn(2+)</name>
        <dbReference type="ChEBI" id="CHEBI:29035"/>
    </cofactor>
    <cofactor evidence="3">
        <name>Co(2+)</name>
        <dbReference type="ChEBI" id="CHEBI:48828"/>
    </cofactor>
    <text evidence="1 3">Activity is highest with Mn(2+), followed by Co(2+) (PubMed:27422825). Has low activity with Mg(2+) at high magnesium concentrations (PubMed:27422825). The enzyme probably uses Mg(2+) under physiological conditions (By similarity). Cannot use Cu(2+), Ni(2+), Zn(2+) or Ca(2+) ions (PubMed:27422825).</text>
</comment>
<comment type="activity regulation">
    <text evidence="3">Hydrolysis of UDP and GDP is inhibited by high concentrations of the substrate (PubMed:27422825). GDP hydrolysis is inhibited by GDP (betaS) and GTP (gammaS), the non-hydrolyzable analogs of GDP and GTP (PubMed:27422825).</text>
</comment>
<comment type="biophysicochemical properties">
    <kinetics>
        <KM evidence="3">96.3 uM for ADP</KM>
        <KM evidence="3">102 uM for GDP</KM>
        <KM evidence="3">303 uM for CDP</KM>
        <KM evidence="3">221 uM for UDP</KM>
        <KM evidence="3">203 uM for TDP</KM>
        <Vmax evidence="3">1.15 umol/min/mg enzyme with ADP as substrate</Vmax>
        <Vmax evidence="3">0.985 umol/min/mg enzyme with GDP as substrate</Vmax>
        <Vmax evidence="3">2.11 umol/min/mg enzyme with CDP as substrate</Vmax>
        <Vmax evidence="3">3.84 umol/min/mg enzyme with UDP as substrate</Vmax>
        <Vmax evidence="3">1.88 umol/min/mg enzyme with TDP as substrate</Vmax>
        <text evidence="3">kcat is 24.9 min(-1) with ADP as substrate. kcat is 21.4 min(-1) with GDP as substrate. kcat is 45.8 min(-1) with CDP as substrate. kcat is 83.3 min(-1) with UDP as substrate. kcat is 40.8 min(-1) with TDP as substrate.</text>
    </kinetics>
</comment>
<comment type="disruption phenotype">
    <text evidence="3">Deletion mutant exhibits drastically decreased virulence in a silkworm infection model (PubMed:27422825). It has decreased hemolysin production, nuclease production and colony-spreading ability compared with the parent strain (PubMed:27422825). Deletion of the gene alters the expression of various genes, including the virulence regulatory genes agr, hla, sarZ and sarX, as well as metabolic genes involved in nucleotide metabolism, glycolysis and fermentation pathways (PubMed:27422825).</text>
</comment>
<comment type="miscellaneous">
    <text evidence="3 5">Activity with nucleoside triphosphates was not detected by Imae et al (PubMed:27422825). However, a later study from Wang et al. in S.aureus strain N315 (AC Q7A4T2) shows that Ntdp can also hydrolyze ATP and GTP (Probable). Wang et al. show that Ntdp is dose-dependent in the ATP hydrolysis process and that the ATP hydrolysis activity is difficult to detect under low protein concentration, probably explaining why the Imae group did not have detected this activity (Probable).</text>
</comment>
<comment type="similarity">
    <text evidence="2 5">Belongs to the Ntdp family.</text>
</comment>
<name>NTDP_STAA8</name>
<proteinExistence type="evidence at protein level"/>
<dbReference type="EC" id="3.6.1.15" evidence="1 2"/>
<dbReference type="EC" id="3.6.1.6" evidence="2 3"/>
<dbReference type="EMBL" id="CP000253">
    <property type="protein sequence ID" value="ABD31060.1"/>
    <property type="molecule type" value="Genomic_DNA"/>
</dbReference>
<dbReference type="RefSeq" id="WP_000251253.1">
    <property type="nucleotide sequence ID" value="NZ_LS483365.1"/>
</dbReference>
<dbReference type="RefSeq" id="YP_500501.1">
    <property type="nucleotide sequence ID" value="NC_007795.1"/>
</dbReference>
<dbReference type="SMR" id="Q2G2M8"/>
<dbReference type="STRING" id="93061.SAOUHSC_02004"/>
<dbReference type="PaxDb" id="1280-SAXN108_1897"/>
<dbReference type="GeneID" id="3921884"/>
<dbReference type="KEGG" id="sao:SAOUHSC_02004"/>
<dbReference type="PATRIC" id="fig|93061.5.peg.1820"/>
<dbReference type="eggNOG" id="COG3557">
    <property type="taxonomic scope" value="Bacteria"/>
</dbReference>
<dbReference type="HOGENOM" id="CLU_109787_1_0_9"/>
<dbReference type="OrthoDB" id="1645325at2"/>
<dbReference type="PRO" id="PR:Q2G2M8"/>
<dbReference type="Proteomes" id="UP000008816">
    <property type="component" value="Chromosome"/>
</dbReference>
<dbReference type="GO" id="GO:0000287">
    <property type="term" value="F:magnesium ion binding"/>
    <property type="evidence" value="ECO:0007669"/>
    <property type="project" value="UniProtKB-UniRule"/>
</dbReference>
<dbReference type="GO" id="GO:0017110">
    <property type="term" value="F:nucleoside diphosphate phosphatase activity"/>
    <property type="evidence" value="ECO:0007669"/>
    <property type="project" value="UniProtKB-UniRule"/>
</dbReference>
<dbReference type="GO" id="GO:0017111">
    <property type="term" value="F:ribonucleoside triphosphate phosphatase activity"/>
    <property type="evidence" value="ECO:0007669"/>
    <property type="project" value="UniProtKB-UniRule"/>
</dbReference>
<dbReference type="Gene3D" id="2.40.380.10">
    <property type="entry name" value="FomD-like"/>
    <property type="match status" value="1"/>
</dbReference>
<dbReference type="HAMAP" id="MF_01568">
    <property type="entry name" value="Ntdp"/>
    <property type="match status" value="1"/>
</dbReference>
<dbReference type="InterPro" id="IPR007295">
    <property type="entry name" value="DUF402"/>
</dbReference>
<dbReference type="InterPro" id="IPR035930">
    <property type="entry name" value="FomD-like_sf"/>
</dbReference>
<dbReference type="InterPro" id="IPR050212">
    <property type="entry name" value="Ntdp-like"/>
</dbReference>
<dbReference type="InterPro" id="IPR016882">
    <property type="entry name" value="SA1684"/>
</dbReference>
<dbReference type="NCBIfam" id="NF010183">
    <property type="entry name" value="PRK13662.1"/>
    <property type="match status" value="1"/>
</dbReference>
<dbReference type="PANTHER" id="PTHR39159">
    <property type="match status" value="1"/>
</dbReference>
<dbReference type="PANTHER" id="PTHR39159:SF1">
    <property type="entry name" value="UPF0374 PROTEIN YGAC"/>
    <property type="match status" value="1"/>
</dbReference>
<dbReference type="Pfam" id="PF04167">
    <property type="entry name" value="DUF402"/>
    <property type="match status" value="1"/>
</dbReference>
<dbReference type="PIRSF" id="PIRSF028345">
    <property type="entry name" value="UCP028345"/>
    <property type="match status" value="1"/>
</dbReference>
<dbReference type="SUPFAM" id="SSF159234">
    <property type="entry name" value="FomD-like"/>
    <property type="match status" value="1"/>
</dbReference>
<reference key="1">
    <citation type="book" date="2006" name="Gram positive pathogens, 2nd edition">
        <title>The Staphylococcus aureus NCTC 8325 genome.</title>
        <editorList>
            <person name="Fischetti V."/>
            <person name="Novick R."/>
            <person name="Ferretti J."/>
            <person name="Portnoy D."/>
            <person name="Rood J."/>
        </editorList>
        <authorList>
            <person name="Gillaspy A.F."/>
            <person name="Worrell V."/>
            <person name="Orvis J."/>
            <person name="Roe B.A."/>
            <person name="Dyer D.W."/>
            <person name="Iandolo J.J."/>
        </authorList>
    </citation>
    <scope>NUCLEOTIDE SEQUENCE [LARGE SCALE GENOMIC DNA]</scope>
    <source>
        <strain>NCTC 8325 / PS 47</strain>
    </source>
</reference>
<reference key="2">
    <citation type="journal article" date="2016" name="J. Biol. Chem.">
        <title>Novel nucleoside diphosphatase contributes to Staphylococcus aureus virulence.</title>
        <authorList>
            <person name="Imae K."/>
            <person name="Saito Y."/>
            <person name="Kizaki H."/>
            <person name="Ryuno H."/>
            <person name="Mao H."/>
            <person name="Miyashita A."/>
            <person name="Suzuki Y."/>
            <person name="Sekimizu K."/>
            <person name="Kaito C."/>
        </authorList>
    </citation>
    <scope>FUNCTION</scope>
    <scope>CATALYTIC ACTIVITY</scope>
    <scope>COFACTOR</scope>
    <scope>ACTIVITY REGULATION</scope>
    <scope>BIOPHYSICOCHEMICAL PROPERTIES</scope>
    <scope>DISRUPTION PHENOTYPE</scope>
    <scope>MUTAGENESIS OF TYR-88; ASP-106 AND 123-ASP-GLU-124</scope>
    <source>
        <strain>RN4220</strain>
    </source>
</reference>
<keyword id="KW-0378">Hydrolase</keyword>
<keyword id="KW-0460">Magnesium</keyword>
<keyword id="KW-0479">Metal-binding</keyword>
<keyword id="KW-1185">Reference proteome</keyword>
<sequence>MVRESIPKEGENIKIQSYKHDGKIHRVWSETTILKGTDHVVIGGNDHTLVTESDGRTWITREPAIVYFHSEYWFNVICMFREDGIYYYCNLSSPFVCDEEALKYIDYDLDIKVYPNGKYHLLDEDEYEQHMNQMNYPHDIDIILRRNVDILQQWIEQKKGPFAPDFIKVWKERYKKIRQY</sequence>
<feature type="chain" id="PRO_0000248105" description="Nucleoside triphosphate/diphosphate phosphatase">
    <location>
        <begin position="1"/>
        <end position="180"/>
    </location>
</feature>
<feature type="active site" description="Proton donor" evidence="2">
    <location>
        <position position="26"/>
    </location>
</feature>
<feature type="binding site" evidence="2">
    <location>
        <position position="90"/>
    </location>
    <ligand>
        <name>Mg(2+)</name>
        <dbReference type="ChEBI" id="CHEBI:18420"/>
        <label>1</label>
    </ligand>
</feature>
<feature type="binding site" evidence="2">
    <location>
        <position position="106"/>
    </location>
    <ligand>
        <name>Mg(2+)</name>
        <dbReference type="ChEBI" id="CHEBI:18420"/>
        <label>1</label>
    </ligand>
</feature>
<feature type="binding site" evidence="2">
    <location>
        <position position="108"/>
    </location>
    <ligand>
        <name>Mg(2+)</name>
        <dbReference type="ChEBI" id="CHEBI:18420"/>
        <label>2</label>
    </ligand>
</feature>
<feature type="binding site" evidence="2">
    <location>
        <position position="110"/>
    </location>
    <ligand>
        <name>Mg(2+)</name>
        <dbReference type="ChEBI" id="CHEBI:18420"/>
        <label>1</label>
    </ligand>
</feature>
<feature type="binding site" evidence="2">
    <location>
        <position position="110"/>
    </location>
    <ligand>
        <name>Mg(2+)</name>
        <dbReference type="ChEBI" id="CHEBI:18420"/>
        <label>2</label>
    </ligand>
</feature>
<feature type="binding site" evidence="2">
    <location>
        <position position="123"/>
    </location>
    <ligand>
        <name>Mg(2+)</name>
        <dbReference type="ChEBI" id="CHEBI:18420"/>
        <label>2</label>
    </ligand>
</feature>
<feature type="binding site" evidence="2">
    <location>
        <position position="126"/>
    </location>
    <ligand>
        <name>Mg(2+)</name>
        <dbReference type="ChEBI" id="CHEBI:18420"/>
        <label>2</label>
    </ligand>
</feature>
<feature type="mutagenesis site" description="Loss of UDP hydrolysis activity. Cannot restore the hemolysin production of the deletion mutant." evidence="3">
    <original>Y</original>
    <variation>A</variation>
    <location>
        <position position="88"/>
    </location>
</feature>
<feature type="mutagenesis site" description="Loss of UDP hydrolysis activity. Cannot restore the hemolysin production of the deletion mutant." evidence="3">
    <original>D</original>
    <variation>A</variation>
    <location>
        <position position="106"/>
    </location>
</feature>
<feature type="mutagenesis site" description="Loss of UDP hydrolysis activity. Cannot restore the hemolysin production of the deletion mutant." evidence="3">
    <original>DE</original>
    <variation>AA</variation>
    <location>
        <begin position="123"/>
        <end position="124"/>
    </location>
</feature>
<organism>
    <name type="scientific">Staphylococcus aureus (strain NCTC 8325 / PS 47)</name>
    <dbReference type="NCBI Taxonomy" id="93061"/>
    <lineage>
        <taxon>Bacteria</taxon>
        <taxon>Bacillati</taxon>
        <taxon>Bacillota</taxon>
        <taxon>Bacilli</taxon>
        <taxon>Bacillales</taxon>
        <taxon>Staphylococcaceae</taxon>
        <taxon>Staphylococcus</taxon>
    </lineage>
</organism>
<protein>
    <recommendedName>
        <fullName evidence="2 5">Nucleoside triphosphate/diphosphate phosphatase</fullName>
        <ecNumber evidence="1 2">3.6.1.15</ecNumber>
        <ecNumber evidence="2 3">3.6.1.6</ecNumber>
    </recommendedName>
    <alternativeName>
        <fullName evidence="4">Nucleoside diphosphatase</fullName>
        <shortName evidence="4">NDPase</shortName>
    </alternativeName>
</protein>
<accession>Q2G2M8</accession>